<evidence type="ECO:0000250" key="1"/>
<evidence type="ECO:0000305" key="2"/>
<protein>
    <recommendedName>
        <fullName>tRNA pseudouridine synthase-like 1</fullName>
        <ecNumber>5.4.99.-</ecNumber>
    </recommendedName>
    <alternativeName>
        <fullName>tRNA pseudouridylate synthase-like 1</fullName>
    </alternativeName>
    <alternativeName>
        <fullName>tRNA-uridine isomerase-like 1</fullName>
    </alternativeName>
</protein>
<feature type="chain" id="PRO_0000358317" description="tRNA pseudouridine synthase-like 1">
    <location>
        <begin position="1"/>
        <end position="298"/>
    </location>
</feature>
<feature type="active site" description="Nucleophile" evidence="1">
    <location>
        <position position="60"/>
    </location>
</feature>
<feature type="binding site" evidence="1">
    <location>
        <position position="124"/>
    </location>
    <ligand>
        <name>substrate</name>
    </ligand>
</feature>
<dbReference type="EC" id="5.4.99.-"/>
<dbReference type="EMBL" id="BC072895">
    <property type="protein sequence ID" value="AAH72895.1"/>
    <property type="molecule type" value="mRNA"/>
</dbReference>
<dbReference type="RefSeq" id="NP_001085529.1">
    <property type="nucleotide sequence ID" value="NM_001092060.1"/>
</dbReference>
<dbReference type="SMR" id="Q6GQ53"/>
<dbReference type="DNASU" id="443955"/>
<dbReference type="GeneID" id="443955"/>
<dbReference type="KEGG" id="xla:443955"/>
<dbReference type="AGR" id="Xenbase:XB-GENE-991886"/>
<dbReference type="CTD" id="443955"/>
<dbReference type="Xenbase" id="XB-GENE-991886">
    <property type="gene designation" value="pusl1.L"/>
</dbReference>
<dbReference type="OrthoDB" id="271910at2759"/>
<dbReference type="Proteomes" id="UP000186698">
    <property type="component" value="Chromosome 7L"/>
</dbReference>
<dbReference type="Bgee" id="443955">
    <property type="expression patterns" value="Expressed in egg cell and 19 other cell types or tissues"/>
</dbReference>
<dbReference type="GO" id="GO:0009982">
    <property type="term" value="F:pseudouridine synthase activity"/>
    <property type="evidence" value="ECO:0000318"/>
    <property type="project" value="GO_Central"/>
</dbReference>
<dbReference type="GO" id="GO:0003723">
    <property type="term" value="F:RNA binding"/>
    <property type="evidence" value="ECO:0007669"/>
    <property type="project" value="InterPro"/>
</dbReference>
<dbReference type="GO" id="GO:0106029">
    <property type="term" value="F:tRNA pseudouridine synthase activity"/>
    <property type="evidence" value="ECO:0007669"/>
    <property type="project" value="RHEA"/>
</dbReference>
<dbReference type="GO" id="GO:0031119">
    <property type="term" value="P:tRNA pseudouridine synthesis"/>
    <property type="evidence" value="ECO:0000318"/>
    <property type="project" value="GO_Central"/>
</dbReference>
<dbReference type="CDD" id="cd02570">
    <property type="entry name" value="PseudoU_synth_EcTruA"/>
    <property type="match status" value="1"/>
</dbReference>
<dbReference type="FunFam" id="3.30.70.580:FF:000011">
    <property type="entry name" value="tRNA pseudouridine synthase"/>
    <property type="match status" value="1"/>
</dbReference>
<dbReference type="Gene3D" id="3.30.70.660">
    <property type="entry name" value="Pseudouridine synthase I, catalytic domain, C-terminal subdomain"/>
    <property type="match status" value="1"/>
</dbReference>
<dbReference type="Gene3D" id="3.30.70.580">
    <property type="entry name" value="Pseudouridine synthase I, catalytic domain, N-terminal subdomain"/>
    <property type="match status" value="1"/>
</dbReference>
<dbReference type="HAMAP" id="MF_00171">
    <property type="entry name" value="TruA"/>
    <property type="match status" value="1"/>
</dbReference>
<dbReference type="InterPro" id="IPR020103">
    <property type="entry name" value="PsdUridine_synth_cat_dom_sf"/>
</dbReference>
<dbReference type="InterPro" id="IPR001406">
    <property type="entry name" value="PsdUridine_synth_TruA"/>
</dbReference>
<dbReference type="InterPro" id="IPR020097">
    <property type="entry name" value="PsdUridine_synth_TruA_a/b_dom"/>
</dbReference>
<dbReference type="InterPro" id="IPR020095">
    <property type="entry name" value="PsdUridine_synth_TruA_C"/>
</dbReference>
<dbReference type="InterPro" id="IPR020094">
    <property type="entry name" value="TruA/RsuA/RluB/E/F_N"/>
</dbReference>
<dbReference type="PANTHER" id="PTHR11142">
    <property type="entry name" value="PSEUDOURIDYLATE SYNTHASE"/>
    <property type="match status" value="1"/>
</dbReference>
<dbReference type="PANTHER" id="PTHR11142:SF0">
    <property type="entry name" value="TRNA PSEUDOURIDINE SYNTHASE-LIKE 1"/>
    <property type="match status" value="1"/>
</dbReference>
<dbReference type="Pfam" id="PF01416">
    <property type="entry name" value="PseudoU_synth_1"/>
    <property type="match status" value="2"/>
</dbReference>
<dbReference type="PIRSF" id="PIRSF001430">
    <property type="entry name" value="tRNA_psdUrid_synth"/>
    <property type="match status" value="1"/>
</dbReference>
<dbReference type="SUPFAM" id="SSF55120">
    <property type="entry name" value="Pseudouridine synthase"/>
    <property type="match status" value="1"/>
</dbReference>
<name>PUSL1_XENLA</name>
<gene>
    <name type="primary">pusl1</name>
</gene>
<accession>Q6GQ53</accession>
<proteinExistence type="evidence at transcript level"/>
<reference key="1">
    <citation type="submission" date="2004-06" db="EMBL/GenBank/DDBJ databases">
        <authorList>
            <consortium name="NIH - Xenopus Gene Collection (XGC) project"/>
        </authorList>
    </citation>
    <scope>NUCLEOTIDE SEQUENCE [LARGE SCALE MRNA]</scope>
    <source>
        <tissue>Ovary</tissue>
    </source>
</reference>
<comment type="catalytic activity">
    <reaction>
        <text>a uridine in tRNA = a pseudouridine in tRNA</text>
        <dbReference type="Rhea" id="RHEA:54572"/>
        <dbReference type="Rhea" id="RHEA-COMP:13339"/>
        <dbReference type="Rhea" id="RHEA-COMP:13934"/>
        <dbReference type="ChEBI" id="CHEBI:65314"/>
        <dbReference type="ChEBI" id="CHEBI:65315"/>
    </reaction>
</comment>
<comment type="similarity">
    <text evidence="2">Belongs to the tRNA pseudouridine synthase TruA family.</text>
</comment>
<keyword id="KW-0413">Isomerase</keyword>
<keyword id="KW-1185">Reference proteome</keyword>
<keyword id="KW-0819">tRNA processing</keyword>
<sequence>MHSSKARYLVFFQYYGTKYSGVMETPITQSVLGVQNYLEVAAQKLRPVGTIKFFISSRTDSGVHAICNLAHVDIERAKGKPPFTEEILVQAMNHHLQPEPIRLLKAIRVCDNFHARHNALSRTYVYRVAAGCSRPELPVFEGNLCWAIQDGLNVTAINEASKMLLGTHNFSAFRSANSENAFKSPIKTLQQADINPSCGILTHHWQSRNLQFWDFTFRARSFLYKQVRRMTGALVAVGQGRLTPQQIKEFLENQDPNCFLGNFVAPPHGLFLKDVEYDGTELNGFSAEETQKYSSHLN</sequence>
<organism>
    <name type="scientific">Xenopus laevis</name>
    <name type="common">African clawed frog</name>
    <dbReference type="NCBI Taxonomy" id="8355"/>
    <lineage>
        <taxon>Eukaryota</taxon>
        <taxon>Metazoa</taxon>
        <taxon>Chordata</taxon>
        <taxon>Craniata</taxon>
        <taxon>Vertebrata</taxon>
        <taxon>Euteleostomi</taxon>
        <taxon>Amphibia</taxon>
        <taxon>Batrachia</taxon>
        <taxon>Anura</taxon>
        <taxon>Pipoidea</taxon>
        <taxon>Pipidae</taxon>
        <taxon>Xenopodinae</taxon>
        <taxon>Xenopus</taxon>
        <taxon>Xenopus</taxon>
    </lineage>
</organism>